<comment type="function">
    <text evidence="1">Catalyzes the reversible reaction in which hydroxymethyl group from 5,10-methylenetetrahydrofolate is transferred onto alpha-ketoisovalerate to form ketopantoate.</text>
</comment>
<comment type="catalytic activity">
    <reaction evidence="1">
        <text>3-methyl-2-oxobutanoate + (6R)-5,10-methylene-5,6,7,8-tetrahydrofolate + H2O = 2-dehydropantoate + (6S)-5,6,7,8-tetrahydrofolate</text>
        <dbReference type="Rhea" id="RHEA:11824"/>
        <dbReference type="ChEBI" id="CHEBI:11561"/>
        <dbReference type="ChEBI" id="CHEBI:11851"/>
        <dbReference type="ChEBI" id="CHEBI:15377"/>
        <dbReference type="ChEBI" id="CHEBI:15636"/>
        <dbReference type="ChEBI" id="CHEBI:57453"/>
        <dbReference type="EC" id="2.1.2.11"/>
    </reaction>
</comment>
<comment type="cofactor">
    <cofactor evidence="1">
        <name>Mg(2+)</name>
        <dbReference type="ChEBI" id="CHEBI:18420"/>
    </cofactor>
    <text evidence="1">Binds 1 Mg(2+) ion per subunit.</text>
</comment>
<comment type="pathway">
    <text evidence="1">Cofactor biosynthesis; (R)-pantothenate biosynthesis; (R)-pantoate from 3-methyl-2-oxobutanoate: step 1/2.</text>
</comment>
<comment type="subunit">
    <text evidence="1">Homodecamer; pentamer of dimers.</text>
</comment>
<comment type="subcellular location">
    <subcellularLocation>
        <location evidence="1">Cytoplasm</location>
    </subcellularLocation>
</comment>
<comment type="similarity">
    <text evidence="1">Belongs to the PanB family.</text>
</comment>
<protein>
    <recommendedName>
        <fullName evidence="1">3-methyl-2-oxobutanoate hydroxymethyltransferase</fullName>
        <ecNumber evidence="1">2.1.2.11</ecNumber>
    </recommendedName>
    <alternativeName>
        <fullName evidence="1">Ketopantoate hydroxymethyltransferase</fullName>
        <shortName evidence="1">KPHMT</shortName>
    </alternativeName>
</protein>
<dbReference type="EC" id="2.1.2.11" evidence="1"/>
<dbReference type="EMBL" id="BX572603">
    <property type="protein sequence ID" value="CAE28539.1"/>
    <property type="molecule type" value="Genomic_DNA"/>
</dbReference>
<dbReference type="RefSeq" id="WP_011158643.1">
    <property type="nucleotide sequence ID" value="NZ_CP116810.1"/>
</dbReference>
<dbReference type="SMR" id="Q6N583"/>
<dbReference type="STRING" id="258594.RPA3098"/>
<dbReference type="GeneID" id="66894180"/>
<dbReference type="eggNOG" id="COG0413">
    <property type="taxonomic scope" value="Bacteria"/>
</dbReference>
<dbReference type="HOGENOM" id="CLU_036645_1_0_5"/>
<dbReference type="PhylomeDB" id="Q6N583"/>
<dbReference type="UniPathway" id="UPA00028">
    <property type="reaction ID" value="UER00003"/>
</dbReference>
<dbReference type="GO" id="GO:0005737">
    <property type="term" value="C:cytoplasm"/>
    <property type="evidence" value="ECO:0007669"/>
    <property type="project" value="UniProtKB-SubCell"/>
</dbReference>
<dbReference type="GO" id="GO:0003864">
    <property type="term" value="F:3-methyl-2-oxobutanoate hydroxymethyltransferase activity"/>
    <property type="evidence" value="ECO:0007669"/>
    <property type="project" value="UniProtKB-UniRule"/>
</dbReference>
<dbReference type="GO" id="GO:0000287">
    <property type="term" value="F:magnesium ion binding"/>
    <property type="evidence" value="ECO:0007669"/>
    <property type="project" value="TreeGrafter"/>
</dbReference>
<dbReference type="GO" id="GO:0015940">
    <property type="term" value="P:pantothenate biosynthetic process"/>
    <property type="evidence" value="ECO:0007669"/>
    <property type="project" value="UniProtKB-UniRule"/>
</dbReference>
<dbReference type="CDD" id="cd06557">
    <property type="entry name" value="KPHMT-like"/>
    <property type="match status" value="1"/>
</dbReference>
<dbReference type="FunFam" id="3.20.20.60:FF:000003">
    <property type="entry name" value="3-methyl-2-oxobutanoate hydroxymethyltransferase"/>
    <property type="match status" value="1"/>
</dbReference>
<dbReference type="Gene3D" id="3.20.20.60">
    <property type="entry name" value="Phosphoenolpyruvate-binding domains"/>
    <property type="match status" value="1"/>
</dbReference>
<dbReference type="HAMAP" id="MF_00156">
    <property type="entry name" value="PanB"/>
    <property type="match status" value="1"/>
</dbReference>
<dbReference type="InterPro" id="IPR003700">
    <property type="entry name" value="Pantoate_hydroxy_MeTrfase"/>
</dbReference>
<dbReference type="InterPro" id="IPR015813">
    <property type="entry name" value="Pyrv/PenolPyrv_kinase-like_dom"/>
</dbReference>
<dbReference type="InterPro" id="IPR040442">
    <property type="entry name" value="Pyrv_kinase-like_dom_sf"/>
</dbReference>
<dbReference type="NCBIfam" id="TIGR00222">
    <property type="entry name" value="panB"/>
    <property type="match status" value="1"/>
</dbReference>
<dbReference type="NCBIfam" id="NF001452">
    <property type="entry name" value="PRK00311.1"/>
    <property type="match status" value="1"/>
</dbReference>
<dbReference type="PANTHER" id="PTHR20881">
    <property type="entry name" value="3-METHYL-2-OXOBUTANOATE HYDROXYMETHYLTRANSFERASE"/>
    <property type="match status" value="1"/>
</dbReference>
<dbReference type="PANTHER" id="PTHR20881:SF0">
    <property type="entry name" value="3-METHYL-2-OXOBUTANOATE HYDROXYMETHYLTRANSFERASE"/>
    <property type="match status" value="1"/>
</dbReference>
<dbReference type="Pfam" id="PF02548">
    <property type="entry name" value="Pantoate_transf"/>
    <property type="match status" value="1"/>
</dbReference>
<dbReference type="PIRSF" id="PIRSF000388">
    <property type="entry name" value="Pantoate_hydroxy_MeTrfase"/>
    <property type="match status" value="1"/>
</dbReference>
<dbReference type="SUPFAM" id="SSF51621">
    <property type="entry name" value="Phosphoenolpyruvate/pyruvate domain"/>
    <property type="match status" value="1"/>
</dbReference>
<organism>
    <name type="scientific">Rhodopseudomonas palustris (strain ATCC BAA-98 / CGA009)</name>
    <dbReference type="NCBI Taxonomy" id="258594"/>
    <lineage>
        <taxon>Bacteria</taxon>
        <taxon>Pseudomonadati</taxon>
        <taxon>Pseudomonadota</taxon>
        <taxon>Alphaproteobacteria</taxon>
        <taxon>Hyphomicrobiales</taxon>
        <taxon>Nitrobacteraceae</taxon>
        <taxon>Rhodopseudomonas</taxon>
    </lineage>
</organism>
<evidence type="ECO:0000255" key="1">
    <source>
        <dbReference type="HAMAP-Rule" id="MF_00156"/>
    </source>
</evidence>
<proteinExistence type="inferred from homology"/>
<feature type="chain" id="PRO_0000184883" description="3-methyl-2-oxobutanoate hydroxymethyltransferase">
    <location>
        <begin position="1"/>
        <end position="274"/>
    </location>
</feature>
<feature type="active site" description="Proton acceptor" evidence="1">
    <location>
        <position position="187"/>
    </location>
</feature>
<feature type="binding site" evidence="1">
    <location>
        <begin position="49"/>
        <end position="50"/>
    </location>
    <ligand>
        <name>3-methyl-2-oxobutanoate</name>
        <dbReference type="ChEBI" id="CHEBI:11851"/>
    </ligand>
</feature>
<feature type="binding site" evidence="1">
    <location>
        <position position="49"/>
    </location>
    <ligand>
        <name>Mg(2+)</name>
        <dbReference type="ChEBI" id="CHEBI:18420"/>
    </ligand>
</feature>
<feature type="binding site" evidence="1">
    <location>
        <position position="88"/>
    </location>
    <ligand>
        <name>3-methyl-2-oxobutanoate</name>
        <dbReference type="ChEBI" id="CHEBI:11851"/>
    </ligand>
</feature>
<feature type="binding site" evidence="1">
    <location>
        <position position="88"/>
    </location>
    <ligand>
        <name>Mg(2+)</name>
        <dbReference type="ChEBI" id="CHEBI:18420"/>
    </ligand>
</feature>
<feature type="binding site" evidence="1">
    <location>
        <position position="118"/>
    </location>
    <ligand>
        <name>3-methyl-2-oxobutanoate</name>
        <dbReference type="ChEBI" id="CHEBI:11851"/>
    </ligand>
</feature>
<feature type="binding site" evidence="1">
    <location>
        <position position="120"/>
    </location>
    <ligand>
        <name>Mg(2+)</name>
        <dbReference type="ChEBI" id="CHEBI:18420"/>
    </ligand>
</feature>
<accession>Q6N583</accession>
<sequence>MSVQSTIRRKTAPDIRARKGGDPIVMLTSYHAHTASLVDRYCDAILVGDSLGNVMHGFETTVPVTLEMMILQGHAVMRGSQHALVVVDMPFGSYEASKEQAFHSAARILKETHCGAVKLEGGVRMAETIAFLTERGIPVMGHIGLTPQSINTLGSFRAQGREEGSWEPIEADARAVADAGAFSVVVEAVAEPLGRKITEMISIPTIGIGASAACDGQVLVLEDMLGLSPKPPKFVKRYGDLGPGIEAAIKGYAEEVRSRAFPGPEHVYGMKSKA</sequence>
<name>PANB_RHOPA</name>
<keyword id="KW-0963">Cytoplasm</keyword>
<keyword id="KW-0460">Magnesium</keyword>
<keyword id="KW-0479">Metal-binding</keyword>
<keyword id="KW-0566">Pantothenate biosynthesis</keyword>
<keyword id="KW-0808">Transferase</keyword>
<reference key="1">
    <citation type="journal article" date="2004" name="Nat. Biotechnol.">
        <title>Complete genome sequence of the metabolically versatile photosynthetic bacterium Rhodopseudomonas palustris.</title>
        <authorList>
            <person name="Larimer F.W."/>
            <person name="Chain P."/>
            <person name="Hauser L."/>
            <person name="Lamerdin J.E."/>
            <person name="Malfatti S."/>
            <person name="Do L."/>
            <person name="Land M.L."/>
            <person name="Pelletier D.A."/>
            <person name="Beatty J.T."/>
            <person name="Lang A.S."/>
            <person name="Tabita F.R."/>
            <person name="Gibson J.L."/>
            <person name="Hanson T.E."/>
            <person name="Bobst C."/>
            <person name="Torres y Torres J.L."/>
            <person name="Peres C."/>
            <person name="Harrison F.H."/>
            <person name="Gibson J."/>
            <person name="Harwood C.S."/>
        </authorList>
    </citation>
    <scope>NUCLEOTIDE SEQUENCE [LARGE SCALE GENOMIC DNA]</scope>
    <source>
        <strain>ATCC BAA-98 / CGA009</strain>
    </source>
</reference>
<gene>
    <name evidence="1" type="primary">panB</name>
    <name type="ordered locus">RPA3098</name>
</gene>